<keyword id="KW-0320">Glycogen biosynthesis</keyword>
<keyword id="KW-0328">Glycosyltransferase</keyword>
<keyword id="KW-1185">Reference proteome</keyword>
<keyword id="KW-0808">Transferase</keyword>
<comment type="function">
    <text evidence="1">Synthesizes alpha-1,4-glucan chains using ADP-glucose.</text>
</comment>
<comment type="catalytic activity">
    <reaction evidence="1">
        <text>[(1-&gt;4)-alpha-D-glucosyl](n) + ADP-alpha-D-glucose = [(1-&gt;4)-alpha-D-glucosyl](n+1) + ADP + H(+)</text>
        <dbReference type="Rhea" id="RHEA:18189"/>
        <dbReference type="Rhea" id="RHEA-COMP:9584"/>
        <dbReference type="Rhea" id="RHEA-COMP:9587"/>
        <dbReference type="ChEBI" id="CHEBI:15378"/>
        <dbReference type="ChEBI" id="CHEBI:15444"/>
        <dbReference type="ChEBI" id="CHEBI:57498"/>
        <dbReference type="ChEBI" id="CHEBI:456216"/>
        <dbReference type="EC" id="2.4.1.21"/>
    </reaction>
</comment>
<comment type="pathway">
    <text evidence="1">Glycan biosynthesis; glycogen biosynthesis.</text>
</comment>
<comment type="similarity">
    <text evidence="1">Belongs to the glycosyltransferase 1 family. Bacterial/plant glycogen synthase subfamily.</text>
</comment>
<organism>
    <name type="scientific">Anaeromyxobacter dehalogenans (strain 2CP-C)</name>
    <dbReference type="NCBI Taxonomy" id="290397"/>
    <lineage>
        <taxon>Bacteria</taxon>
        <taxon>Pseudomonadati</taxon>
        <taxon>Myxococcota</taxon>
        <taxon>Myxococcia</taxon>
        <taxon>Myxococcales</taxon>
        <taxon>Cystobacterineae</taxon>
        <taxon>Anaeromyxobacteraceae</taxon>
        <taxon>Anaeromyxobacter</taxon>
    </lineage>
</organism>
<sequence length="475" mass="51946">MQILFVASEVAPWSKTGGLGDVAGALPRALAERGNEVVVVTPRHGSIDPRAAGLQPVRTSLHVRGEPVALWVKRGPAPVYFVEHPHLFGSRRGLYGDGGRDHPDNAERFAFLTRAALALPGALGLRPRILHLNDWQCGLGPWLLRHEHARDPALAGARTVFTIHNLAYQGLFPKQVLPALGLPWEVFRWEAMEFFDQLSFMKAGLAFADALTTVSPTYAREILTPEGGASLDALLRHRARDLHGILNGIDVHAWDPARDPHLPAHFTPGELAGKAACKAALQREVGLPVRRDAPLAGLVTRLAEQKGIDLVAAALPALLARDVQVVLLGSGDPAYEEAFARAAREHPDRVAARIGFDEGLAHRIEAGADLFLMPSRFEPCGLNQMYSLRYGTVPVVRSVGGLADTVEDFDGFARGTGFRFAEYTPQALLTATRRALDVFRDRRAWRGLVERGMAEDNSWERSAARYEALYRTLAP</sequence>
<reference key="1">
    <citation type="submission" date="2006-01" db="EMBL/GenBank/DDBJ databases">
        <title>Complete sequence of Anaeromyxobacter dehalogenans 2CP-C.</title>
        <authorList>
            <person name="Copeland A."/>
            <person name="Lucas S."/>
            <person name="Lapidus A."/>
            <person name="Barry K."/>
            <person name="Detter J.C."/>
            <person name="Glavina T."/>
            <person name="Hammon N."/>
            <person name="Israni S."/>
            <person name="Pitluck S."/>
            <person name="Brettin T."/>
            <person name="Bruce D."/>
            <person name="Han C."/>
            <person name="Tapia R."/>
            <person name="Gilna P."/>
            <person name="Kiss H."/>
            <person name="Schmutz J."/>
            <person name="Larimer F."/>
            <person name="Land M."/>
            <person name="Kyrpides N."/>
            <person name="Anderson I."/>
            <person name="Sanford R.A."/>
            <person name="Ritalahti K.M."/>
            <person name="Thomas H.S."/>
            <person name="Kirby J.R."/>
            <person name="Zhulin I.B."/>
            <person name="Loeffler F.E."/>
            <person name="Richardson P."/>
        </authorList>
    </citation>
    <scope>NUCLEOTIDE SEQUENCE [LARGE SCALE GENOMIC DNA]</scope>
    <source>
        <strain>2CP-C</strain>
    </source>
</reference>
<feature type="chain" id="PRO_0000241789" description="Glycogen synthase">
    <location>
        <begin position="1"/>
        <end position="475"/>
    </location>
</feature>
<feature type="binding site" evidence="1">
    <location>
        <position position="15"/>
    </location>
    <ligand>
        <name>ADP-alpha-D-glucose</name>
        <dbReference type="ChEBI" id="CHEBI:57498"/>
    </ligand>
</feature>
<evidence type="ECO:0000255" key="1">
    <source>
        <dbReference type="HAMAP-Rule" id="MF_00484"/>
    </source>
</evidence>
<accession>Q2IM81</accession>
<proteinExistence type="inferred from homology"/>
<protein>
    <recommendedName>
        <fullName evidence="1">Glycogen synthase</fullName>
        <ecNumber evidence="1">2.4.1.21</ecNumber>
    </recommendedName>
    <alternativeName>
        <fullName evidence="1">Starch [bacterial glycogen] synthase</fullName>
    </alternativeName>
</protein>
<name>GLGA_ANADE</name>
<gene>
    <name evidence="1" type="primary">glgA</name>
    <name type="ordered locus">Adeh_0135</name>
</gene>
<dbReference type="EC" id="2.4.1.21" evidence="1"/>
<dbReference type="EMBL" id="CP000251">
    <property type="protein sequence ID" value="ABC79912.1"/>
    <property type="molecule type" value="Genomic_DNA"/>
</dbReference>
<dbReference type="RefSeq" id="WP_011419195.1">
    <property type="nucleotide sequence ID" value="NC_007760.1"/>
</dbReference>
<dbReference type="SMR" id="Q2IM81"/>
<dbReference type="STRING" id="290397.Adeh_0135"/>
<dbReference type="CAZy" id="GT5">
    <property type="family name" value="Glycosyltransferase Family 5"/>
</dbReference>
<dbReference type="KEGG" id="ade:Adeh_0135"/>
<dbReference type="eggNOG" id="COG0297">
    <property type="taxonomic scope" value="Bacteria"/>
</dbReference>
<dbReference type="HOGENOM" id="CLU_009583_18_2_7"/>
<dbReference type="OrthoDB" id="9808590at2"/>
<dbReference type="UniPathway" id="UPA00164"/>
<dbReference type="Proteomes" id="UP000001935">
    <property type="component" value="Chromosome"/>
</dbReference>
<dbReference type="GO" id="GO:0005829">
    <property type="term" value="C:cytosol"/>
    <property type="evidence" value="ECO:0007669"/>
    <property type="project" value="TreeGrafter"/>
</dbReference>
<dbReference type="GO" id="GO:0009011">
    <property type="term" value="F:alpha-1,4-glucan glucosyltransferase (ADP-glucose donor) activity"/>
    <property type="evidence" value="ECO:0007669"/>
    <property type="project" value="UniProtKB-UniRule"/>
</dbReference>
<dbReference type="GO" id="GO:0004373">
    <property type="term" value="F:alpha-1,4-glucan glucosyltransferase (UDP-glucose donor) activity"/>
    <property type="evidence" value="ECO:0007669"/>
    <property type="project" value="InterPro"/>
</dbReference>
<dbReference type="GO" id="GO:0005978">
    <property type="term" value="P:glycogen biosynthetic process"/>
    <property type="evidence" value="ECO:0007669"/>
    <property type="project" value="UniProtKB-UniRule"/>
</dbReference>
<dbReference type="CDD" id="cd03791">
    <property type="entry name" value="GT5_Glycogen_synthase_DULL1-like"/>
    <property type="match status" value="1"/>
</dbReference>
<dbReference type="Gene3D" id="3.40.50.2000">
    <property type="entry name" value="Glycogen Phosphorylase B"/>
    <property type="match status" value="2"/>
</dbReference>
<dbReference type="HAMAP" id="MF_00484">
    <property type="entry name" value="Glycogen_synth"/>
    <property type="match status" value="1"/>
</dbReference>
<dbReference type="InterPro" id="IPR001296">
    <property type="entry name" value="Glyco_trans_1"/>
</dbReference>
<dbReference type="InterPro" id="IPR011835">
    <property type="entry name" value="GS/SS"/>
</dbReference>
<dbReference type="InterPro" id="IPR013534">
    <property type="entry name" value="Starch_synth_cat_dom"/>
</dbReference>
<dbReference type="NCBIfam" id="TIGR02095">
    <property type="entry name" value="glgA"/>
    <property type="match status" value="1"/>
</dbReference>
<dbReference type="NCBIfam" id="NF001899">
    <property type="entry name" value="PRK00654.1-2"/>
    <property type="match status" value="1"/>
</dbReference>
<dbReference type="PANTHER" id="PTHR45825:SF11">
    <property type="entry name" value="ALPHA AMYLASE DOMAIN-CONTAINING PROTEIN"/>
    <property type="match status" value="1"/>
</dbReference>
<dbReference type="PANTHER" id="PTHR45825">
    <property type="entry name" value="GRANULE-BOUND STARCH SYNTHASE 1, CHLOROPLASTIC/AMYLOPLASTIC"/>
    <property type="match status" value="1"/>
</dbReference>
<dbReference type="Pfam" id="PF08323">
    <property type="entry name" value="Glyco_transf_5"/>
    <property type="match status" value="1"/>
</dbReference>
<dbReference type="Pfam" id="PF00534">
    <property type="entry name" value="Glycos_transf_1"/>
    <property type="match status" value="1"/>
</dbReference>
<dbReference type="SUPFAM" id="SSF53756">
    <property type="entry name" value="UDP-Glycosyltransferase/glycogen phosphorylase"/>
    <property type="match status" value="1"/>
</dbReference>